<gene>
    <name evidence="1" type="primary">rnc</name>
    <name type="ordered locus">CPS_4122</name>
</gene>
<name>RNC_COLP3</name>
<organism>
    <name type="scientific">Colwellia psychrerythraea (strain 34H / ATCC BAA-681)</name>
    <name type="common">Vibrio psychroerythus</name>
    <dbReference type="NCBI Taxonomy" id="167879"/>
    <lineage>
        <taxon>Bacteria</taxon>
        <taxon>Pseudomonadati</taxon>
        <taxon>Pseudomonadota</taxon>
        <taxon>Gammaproteobacteria</taxon>
        <taxon>Alteromonadales</taxon>
        <taxon>Colwelliaceae</taxon>
        <taxon>Colwellia</taxon>
    </lineage>
</organism>
<protein>
    <recommendedName>
        <fullName evidence="1">Ribonuclease 3</fullName>
        <ecNumber evidence="1">3.1.26.3</ecNumber>
    </recommendedName>
    <alternativeName>
        <fullName evidence="1">Ribonuclease III</fullName>
        <shortName evidence="1">RNase III</shortName>
    </alternativeName>
</protein>
<dbReference type="EC" id="3.1.26.3" evidence="1"/>
<dbReference type="EMBL" id="CP000083">
    <property type="protein sequence ID" value="AAZ27454.1"/>
    <property type="molecule type" value="Genomic_DNA"/>
</dbReference>
<dbReference type="SMR" id="Q47WP5"/>
<dbReference type="STRING" id="167879.CPS_4122"/>
<dbReference type="KEGG" id="cps:CPS_4122"/>
<dbReference type="eggNOG" id="COG0571">
    <property type="taxonomic scope" value="Bacteria"/>
</dbReference>
<dbReference type="HOGENOM" id="CLU_000907_1_1_6"/>
<dbReference type="Proteomes" id="UP000000547">
    <property type="component" value="Chromosome"/>
</dbReference>
<dbReference type="GO" id="GO:0005737">
    <property type="term" value="C:cytoplasm"/>
    <property type="evidence" value="ECO:0007669"/>
    <property type="project" value="UniProtKB-SubCell"/>
</dbReference>
<dbReference type="GO" id="GO:0003725">
    <property type="term" value="F:double-stranded RNA binding"/>
    <property type="evidence" value="ECO:0007669"/>
    <property type="project" value="TreeGrafter"/>
</dbReference>
<dbReference type="GO" id="GO:0046872">
    <property type="term" value="F:metal ion binding"/>
    <property type="evidence" value="ECO:0007669"/>
    <property type="project" value="UniProtKB-KW"/>
</dbReference>
<dbReference type="GO" id="GO:0004525">
    <property type="term" value="F:ribonuclease III activity"/>
    <property type="evidence" value="ECO:0007669"/>
    <property type="project" value="UniProtKB-UniRule"/>
</dbReference>
<dbReference type="GO" id="GO:0019843">
    <property type="term" value="F:rRNA binding"/>
    <property type="evidence" value="ECO:0007669"/>
    <property type="project" value="UniProtKB-KW"/>
</dbReference>
<dbReference type="GO" id="GO:0006397">
    <property type="term" value="P:mRNA processing"/>
    <property type="evidence" value="ECO:0007669"/>
    <property type="project" value="UniProtKB-UniRule"/>
</dbReference>
<dbReference type="GO" id="GO:0010468">
    <property type="term" value="P:regulation of gene expression"/>
    <property type="evidence" value="ECO:0007669"/>
    <property type="project" value="TreeGrafter"/>
</dbReference>
<dbReference type="GO" id="GO:0006364">
    <property type="term" value="P:rRNA processing"/>
    <property type="evidence" value="ECO:0007669"/>
    <property type="project" value="UniProtKB-UniRule"/>
</dbReference>
<dbReference type="GO" id="GO:0008033">
    <property type="term" value="P:tRNA processing"/>
    <property type="evidence" value="ECO:0007669"/>
    <property type="project" value="UniProtKB-KW"/>
</dbReference>
<dbReference type="CDD" id="cd10845">
    <property type="entry name" value="DSRM_RNAse_III_family"/>
    <property type="match status" value="1"/>
</dbReference>
<dbReference type="CDD" id="cd00593">
    <property type="entry name" value="RIBOc"/>
    <property type="match status" value="1"/>
</dbReference>
<dbReference type="FunFam" id="1.10.1520.10:FF:000001">
    <property type="entry name" value="Ribonuclease 3"/>
    <property type="match status" value="1"/>
</dbReference>
<dbReference type="FunFam" id="3.30.160.20:FF:000003">
    <property type="entry name" value="Ribonuclease 3"/>
    <property type="match status" value="1"/>
</dbReference>
<dbReference type="Gene3D" id="3.30.160.20">
    <property type="match status" value="1"/>
</dbReference>
<dbReference type="Gene3D" id="1.10.1520.10">
    <property type="entry name" value="Ribonuclease III domain"/>
    <property type="match status" value="1"/>
</dbReference>
<dbReference type="HAMAP" id="MF_00104">
    <property type="entry name" value="RNase_III"/>
    <property type="match status" value="1"/>
</dbReference>
<dbReference type="InterPro" id="IPR014720">
    <property type="entry name" value="dsRBD_dom"/>
</dbReference>
<dbReference type="InterPro" id="IPR011907">
    <property type="entry name" value="RNase_III"/>
</dbReference>
<dbReference type="InterPro" id="IPR000999">
    <property type="entry name" value="RNase_III_dom"/>
</dbReference>
<dbReference type="InterPro" id="IPR036389">
    <property type="entry name" value="RNase_III_sf"/>
</dbReference>
<dbReference type="NCBIfam" id="TIGR02191">
    <property type="entry name" value="RNaseIII"/>
    <property type="match status" value="1"/>
</dbReference>
<dbReference type="PANTHER" id="PTHR11207:SF0">
    <property type="entry name" value="RIBONUCLEASE 3"/>
    <property type="match status" value="1"/>
</dbReference>
<dbReference type="PANTHER" id="PTHR11207">
    <property type="entry name" value="RIBONUCLEASE III"/>
    <property type="match status" value="1"/>
</dbReference>
<dbReference type="Pfam" id="PF00035">
    <property type="entry name" value="dsrm"/>
    <property type="match status" value="1"/>
</dbReference>
<dbReference type="Pfam" id="PF14622">
    <property type="entry name" value="Ribonucleas_3_3"/>
    <property type="match status" value="1"/>
</dbReference>
<dbReference type="SMART" id="SM00358">
    <property type="entry name" value="DSRM"/>
    <property type="match status" value="1"/>
</dbReference>
<dbReference type="SMART" id="SM00535">
    <property type="entry name" value="RIBOc"/>
    <property type="match status" value="1"/>
</dbReference>
<dbReference type="SUPFAM" id="SSF54768">
    <property type="entry name" value="dsRNA-binding domain-like"/>
    <property type="match status" value="1"/>
</dbReference>
<dbReference type="SUPFAM" id="SSF69065">
    <property type="entry name" value="RNase III domain-like"/>
    <property type="match status" value="1"/>
</dbReference>
<dbReference type="PROSITE" id="PS50137">
    <property type="entry name" value="DS_RBD"/>
    <property type="match status" value="1"/>
</dbReference>
<dbReference type="PROSITE" id="PS00517">
    <property type="entry name" value="RNASE_3_1"/>
    <property type="match status" value="1"/>
</dbReference>
<dbReference type="PROSITE" id="PS50142">
    <property type="entry name" value="RNASE_3_2"/>
    <property type="match status" value="1"/>
</dbReference>
<keyword id="KW-0963">Cytoplasm</keyword>
<keyword id="KW-0255">Endonuclease</keyword>
<keyword id="KW-0378">Hydrolase</keyword>
<keyword id="KW-0460">Magnesium</keyword>
<keyword id="KW-0479">Metal-binding</keyword>
<keyword id="KW-0507">mRNA processing</keyword>
<keyword id="KW-0540">Nuclease</keyword>
<keyword id="KW-0694">RNA-binding</keyword>
<keyword id="KW-0698">rRNA processing</keyword>
<keyword id="KW-0699">rRNA-binding</keyword>
<keyword id="KW-0819">tRNA processing</keyword>
<accession>Q47WP5</accession>
<comment type="function">
    <text evidence="1">Digests double-stranded RNA. Involved in the processing of primary rRNA transcript to yield the immediate precursors to the large and small rRNAs (23S and 16S). Processes some mRNAs, and tRNAs when they are encoded in the rRNA operon. Processes pre-crRNA and tracrRNA of type II CRISPR loci if present in the organism.</text>
</comment>
<comment type="catalytic activity">
    <reaction evidence="1">
        <text>Endonucleolytic cleavage to 5'-phosphomonoester.</text>
        <dbReference type="EC" id="3.1.26.3"/>
    </reaction>
</comment>
<comment type="cofactor">
    <cofactor evidence="1">
        <name>Mg(2+)</name>
        <dbReference type="ChEBI" id="CHEBI:18420"/>
    </cofactor>
</comment>
<comment type="subunit">
    <text evidence="1">Homodimer.</text>
</comment>
<comment type="subcellular location">
    <subcellularLocation>
        <location evidence="1">Cytoplasm</location>
    </subcellularLocation>
</comment>
<comment type="similarity">
    <text evidence="1">Belongs to the ribonuclease III family.</text>
</comment>
<evidence type="ECO:0000255" key="1">
    <source>
        <dbReference type="HAMAP-Rule" id="MF_00104"/>
    </source>
</evidence>
<evidence type="ECO:0000256" key="2">
    <source>
        <dbReference type="SAM" id="MobiDB-lite"/>
    </source>
</evidence>
<feature type="chain" id="PRO_0000228517" description="Ribonuclease 3">
    <location>
        <begin position="1"/>
        <end position="266"/>
    </location>
</feature>
<feature type="domain" description="RNase III" evidence="1">
    <location>
        <begin position="8"/>
        <end position="130"/>
    </location>
</feature>
<feature type="domain" description="DRBM" evidence="1">
    <location>
        <begin position="157"/>
        <end position="227"/>
    </location>
</feature>
<feature type="region of interest" description="Disordered" evidence="2">
    <location>
        <begin position="229"/>
        <end position="266"/>
    </location>
</feature>
<feature type="compositionally biased region" description="Low complexity" evidence="2">
    <location>
        <begin position="253"/>
        <end position="266"/>
    </location>
</feature>
<feature type="active site" evidence="1">
    <location>
        <position position="47"/>
    </location>
</feature>
<feature type="active site" evidence="1">
    <location>
        <position position="119"/>
    </location>
</feature>
<feature type="binding site" evidence="1">
    <location>
        <position position="43"/>
    </location>
    <ligand>
        <name>Mg(2+)</name>
        <dbReference type="ChEBI" id="CHEBI:18420"/>
    </ligand>
</feature>
<feature type="binding site" evidence="1">
    <location>
        <position position="116"/>
    </location>
    <ligand>
        <name>Mg(2+)</name>
        <dbReference type="ChEBI" id="CHEBI:18420"/>
    </ligand>
</feature>
<feature type="binding site" evidence="1">
    <location>
        <position position="119"/>
    </location>
    <ligand>
        <name>Mg(2+)</name>
        <dbReference type="ChEBI" id="CHEBI:18420"/>
    </ligand>
</feature>
<sequence length="266" mass="29877">MKINPHNLARLTKKLGYEFNEPLLLVQALTHRSAKGAHNERLEFLGDSILGFVIAEALYDKFPKHDEGDLTRMRSSLVKGVTLAEVARDFNLGECLILGPGELKSGGHHRESILEDAIEAIIGAVYLDSNIECCKALILSWFERRLMVIKPGNEQKDPKTRLQEFLQGRKIPLPTYEVIDTTGQSHNQEFTVRCQTSVISEVVIAKGTSRRKAEQEAAQQILALIEKEREQEKEVKIKPTKQAKLANPRHTKSNPSSSSKKSSTRK</sequence>
<proteinExistence type="inferred from homology"/>
<reference key="1">
    <citation type="journal article" date="2005" name="Proc. Natl. Acad. Sci. U.S.A.">
        <title>The psychrophilic lifestyle as revealed by the genome sequence of Colwellia psychrerythraea 34H through genomic and proteomic analyses.</title>
        <authorList>
            <person name="Methe B.A."/>
            <person name="Nelson K.E."/>
            <person name="Deming J.W."/>
            <person name="Momen B."/>
            <person name="Melamud E."/>
            <person name="Zhang X."/>
            <person name="Moult J."/>
            <person name="Madupu R."/>
            <person name="Nelson W.C."/>
            <person name="Dodson R.J."/>
            <person name="Brinkac L.M."/>
            <person name="Daugherty S.C."/>
            <person name="Durkin A.S."/>
            <person name="DeBoy R.T."/>
            <person name="Kolonay J.F."/>
            <person name="Sullivan S.A."/>
            <person name="Zhou L."/>
            <person name="Davidsen T.M."/>
            <person name="Wu M."/>
            <person name="Huston A.L."/>
            <person name="Lewis M."/>
            <person name="Weaver B."/>
            <person name="Weidman J.F."/>
            <person name="Khouri H."/>
            <person name="Utterback T.R."/>
            <person name="Feldblyum T.V."/>
            <person name="Fraser C.M."/>
        </authorList>
    </citation>
    <scope>NUCLEOTIDE SEQUENCE [LARGE SCALE GENOMIC DNA]</scope>
    <source>
        <strain>34H / ATCC BAA-681</strain>
    </source>
</reference>